<feature type="chain" id="PRO_1000078933" description="Homoserine O-acetyltransferase">
    <location>
        <begin position="1"/>
        <end position="309"/>
    </location>
</feature>
<feature type="active site" description="Acyl-thioester intermediate" evidence="1">
    <location>
        <position position="142"/>
    </location>
</feature>
<feature type="active site" description="Proton acceptor" evidence="1">
    <location>
        <position position="235"/>
    </location>
</feature>
<feature type="active site" evidence="1">
    <location>
        <position position="237"/>
    </location>
</feature>
<feature type="binding site" evidence="1">
    <location>
        <position position="163"/>
    </location>
    <ligand>
        <name>substrate</name>
    </ligand>
</feature>
<feature type="binding site" evidence="1">
    <location>
        <position position="192"/>
    </location>
    <ligand>
        <name>substrate</name>
    </ligand>
</feature>
<feature type="binding site" evidence="1">
    <location>
        <position position="249"/>
    </location>
    <ligand>
        <name>substrate</name>
    </ligand>
</feature>
<feature type="site" description="Important for acyl-CoA specificity" evidence="1">
    <location>
        <position position="111"/>
    </location>
</feature>
<feature type="site" description="Important for substrate specificity" evidence="1">
    <location>
        <position position="192"/>
    </location>
</feature>
<protein>
    <recommendedName>
        <fullName evidence="1">Homoserine O-acetyltransferase</fullName>
        <shortName evidence="1">HAT</shortName>
        <ecNumber evidence="1">2.3.1.31</ecNumber>
    </recommendedName>
    <alternativeName>
        <fullName evidence="1">Homoserine transacetylase</fullName>
        <shortName evidence="1">HTA</shortName>
    </alternativeName>
</protein>
<sequence length="309" mass="36472">MPIKIPENLPAAEVLREENIFIMTEERAAHQDIRPLEIVILNLMPNKIVTETQLLRLLGNTPLQINVVLLRMVSHSHKNVSQEYLDTFYKSFDQISHRKFDGLIITGAPVETLDFEQVDYWEELKEVMDWSKKNVFSTLHICWGAQAGLYYHYGINKYHVSKKIFGVFEHSVSCEDSPLVRGFDDTFWVPHSRHTQIKREDIEPIKELMILSESKKAGVYLVERKDGRQVFVTGHPEYDPEVLKKEYYRDLKKGMDIDIPVNYFPHDDPEKRPVVRWRSHAYILFNNWLNYYVYQQTPYNLDNIDQAIL</sequence>
<proteinExistence type="inferred from homology"/>
<evidence type="ECO:0000255" key="1">
    <source>
        <dbReference type="HAMAP-Rule" id="MF_00295"/>
    </source>
</evidence>
<name>METAA_PETMO</name>
<comment type="function">
    <text evidence="1">Transfers an acetyl group from acetyl-CoA to L-homoserine, forming acetyl-L-homoserine.</text>
</comment>
<comment type="catalytic activity">
    <reaction evidence="1">
        <text>L-homoserine + acetyl-CoA = O-acetyl-L-homoserine + CoA</text>
        <dbReference type="Rhea" id="RHEA:13701"/>
        <dbReference type="ChEBI" id="CHEBI:57287"/>
        <dbReference type="ChEBI" id="CHEBI:57288"/>
        <dbReference type="ChEBI" id="CHEBI:57476"/>
        <dbReference type="ChEBI" id="CHEBI:57716"/>
        <dbReference type="EC" id="2.3.1.31"/>
    </reaction>
</comment>
<comment type="pathway">
    <text evidence="1">Amino-acid biosynthesis; L-methionine biosynthesis via de novo pathway; O-acetyl-L-homoserine from L-homoserine: step 1/1.</text>
</comment>
<comment type="subcellular location">
    <subcellularLocation>
        <location evidence="1">Cytoplasm</location>
    </subcellularLocation>
</comment>
<comment type="similarity">
    <text evidence="1">Belongs to the MetA family.</text>
</comment>
<gene>
    <name evidence="1" type="primary">metAA</name>
    <name type="ordered locus">Pmob_0733</name>
</gene>
<organism>
    <name type="scientific">Petrotoga mobilis (strain DSM 10674 / SJ95)</name>
    <dbReference type="NCBI Taxonomy" id="403833"/>
    <lineage>
        <taxon>Bacteria</taxon>
        <taxon>Thermotogati</taxon>
        <taxon>Thermotogota</taxon>
        <taxon>Thermotogae</taxon>
        <taxon>Petrotogales</taxon>
        <taxon>Petrotogaceae</taxon>
        <taxon>Petrotoga</taxon>
    </lineage>
</organism>
<accession>A9BFW1</accession>
<dbReference type="EC" id="2.3.1.31" evidence="1"/>
<dbReference type="EMBL" id="CP000879">
    <property type="protein sequence ID" value="ABX31457.1"/>
    <property type="molecule type" value="Genomic_DNA"/>
</dbReference>
<dbReference type="RefSeq" id="WP_012208560.1">
    <property type="nucleotide sequence ID" value="NC_010003.1"/>
</dbReference>
<dbReference type="SMR" id="A9BFW1"/>
<dbReference type="STRING" id="403833.Pmob_0733"/>
<dbReference type="KEGG" id="pmo:Pmob_0733"/>
<dbReference type="eggNOG" id="COG1897">
    <property type="taxonomic scope" value="Bacteria"/>
</dbReference>
<dbReference type="HOGENOM" id="CLU_057851_0_1_0"/>
<dbReference type="OrthoDB" id="9772423at2"/>
<dbReference type="UniPathway" id="UPA00051">
    <property type="reaction ID" value="UER00074"/>
</dbReference>
<dbReference type="Proteomes" id="UP000000789">
    <property type="component" value="Chromosome"/>
</dbReference>
<dbReference type="GO" id="GO:0005737">
    <property type="term" value="C:cytoplasm"/>
    <property type="evidence" value="ECO:0007669"/>
    <property type="project" value="UniProtKB-SubCell"/>
</dbReference>
<dbReference type="GO" id="GO:0004414">
    <property type="term" value="F:homoserine O-acetyltransferase activity"/>
    <property type="evidence" value="ECO:0007669"/>
    <property type="project" value="UniProtKB-EC"/>
</dbReference>
<dbReference type="GO" id="GO:0008899">
    <property type="term" value="F:homoserine O-succinyltransferase activity"/>
    <property type="evidence" value="ECO:0007669"/>
    <property type="project" value="UniProtKB-UniRule"/>
</dbReference>
<dbReference type="GO" id="GO:0019281">
    <property type="term" value="P:L-methionine biosynthetic process from homoserine via O-succinyl-L-homoserine and cystathionine"/>
    <property type="evidence" value="ECO:0007669"/>
    <property type="project" value="InterPro"/>
</dbReference>
<dbReference type="CDD" id="cd03131">
    <property type="entry name" value="GATase1_HTS"/>
    <property type="match status" value="1"/>
</dbReference>
<dbReference type="FunFam" id="3.40.50.880:FF:000004">
    <property type="entry name" value="Homoserine O-succinyltransferase"/>
    <property type="match status" value="1"/>
</dbReference>
<dbReference type="Gene3D" id="3.40.50.880">
    <property type="match status" value="1"/>
</dbReference>
<dbReference type="HAMAP" id="MF_00295">
    <property type="entry name" value="MetA_acyltransf"/>
    <property type="match status" value="1"/>
</dbReference>
<dbReference type="InterPro" id="IPR029062">
    <property type="entry name" value="Class_I_gatase-like"/>
</dbReference>
<dbReference type="InterPro" id="IPR005697">
    <property type="entry name" value="HST_MetA"/>
</dbReference>
<dbReference type="InterPro" id="IPR033752">
    <property type="entry name" value="MetA_family"/>
</dbReference>
<dbReference type="NCBIfam" id="TIGR01001">
    <property type="entry name" value="metA"/>
    <property type="match status" value="1"/>
</dbReference>
<dbReference type="PANTHER" id="PTHR20919">
    <property type="entry name" value="HOMOSERINE O-SUCCINYLTRANSFERASE"/>
    <property type="match status" value="1"/>
</dbReference>
<dbReference type="PANTHER" id="PTHR20919:SF0">
    <property type="entry name" value="HOMOSERINE O-SUCCINYLTRANSFERASE"/>
    <property type="match status" value="1"/>
</dbReference>
<dbReference type="Pfam" id="PF04204">
    <property type="entry name" value="HTS"/>
    <property type="match status" value="1"/>
</dbReference>
<dbReference type="PIRSF" id="PIRSF000450">
    <property type="entry name" value="H_ser_succinyltr"/>
    <property type="match status" value="1"/>
</dbReference>
<dbReference type="SUPFAM" id="SSF52317">
    <property type="entry name" value="Class I glutamine amidotransferase-like"/>
    <property type="match status" value="1"/>
</dbReference>
<keyword id="KW-0012">Acyltransferase</keyword>
<keyword id="KW-0028">Amino-acid biosynthesis</keyword>
<keyword id="KW-0963">Cytoplasm</keyword>
<keyword id="KW-0486">Methionine biosynthesis</keyword>
<keyword id="KW-0808">Transferase</keyword>
<reference key="1">
    <citation type="submission" date="2007-11" db="EMBL/GenBank/DDBJ databases">
        <title>Complete sequence of Petroga mobilis SJ95.</title>
        <authorList>
            <consortium name="US DOE Joint Genome Institute"/>
            <person name="Copeland A."/>
            <person name="Lucas S."/>
            <person name="Lapidus A."/>
            <person name="Barry K."/>
            <person name="Glavina del Rio T."/>
            <person name="Dalin E."/>
            <person name="Tice H."/>
            <person name="Pitluck S."/>
            <person name="Meincke L."/>
            <person name="Brettin T."/>
            <person name="Bruce D."/>
            <person name="Detter J.C."/>
            <person name="Han C."/>
            <person name="Kuske C.R."/>
            <person name="Schmutz J."/>
            <person name="Larimer F."/>
            <person name="Land M."/>
            <person name="Hauser L."/>
            <person name="Kyrpides N."/>
            <person name="Mikhailova N."/>
            <person name="Noll K."/>
            <person name="Richardson P."/>
        </authorList>
    </citation>
    <scope>NUCLEOTIDE SEQUENCE [LARGE SCALE GENOMIC DNA]</scope>
    <source>
        <strain>DSM 10674 / SJ95</strain>
    </source>
</reference>